<feature type="chain" id="PRO_0000050256" description="Lactose phosphotransferase system repressor">
    <location>
        <begin position="1"/>
        <end position="255"/>
    </location>
</feature>
<feature type="domain" description="HTH deoR-type" evidence="1">
    <location>
        <begin position="3"/>
        <end position="58"/>
    </location>
</feature>
<feature type="DNA-binding region" description="H-T-H motif" evidence="1">
    <location>
        <begin position="20"/>
        <end position="39"/>
    </location>
</feature>
<keyword id="KW-0238">DNA-binding</keyword>
<keyword id="KW-0423">Lactose metabolism</keyword>
<keyword id="KW-0614">Plasmid</keyword>
<keyword id="KW-0678">Repressor</keyword>
<keyword id="KW-0804">Transcription</keyword>
<keyword id="KW-0805">Transcription regulation</keyword>
<comment type="function">
    <text>Repressor of the lactose catabolism operon. Galactose-6-phosphate is the inducer.</text>
</comment>
<comment type="miscellaneous">
    <text>This gene was sequenced from pMG820, a laboratory-derived deletion of the naturally occurring plasmid pLP712.</text>
</comment>
<comment type="sequence caution" evidence="2">
    <conflict type="erroneous initiation">
        <sequence resource="EMBL-CDS" id="AAA25174"/>
    </conflict>
</comment>
<comment type="sequence caution" evidence="2">
    <conflict type="erroneous initiation">
        <sequence resource="EMBL-CDS" id="AAA25176"/>
    </conflict>
</comment>
<comment type="sequence caution" evidence="2">
    <conflict type="erroneous initiation">
        <sequence resource="EMBL-CDS" id="AAA25186"/>
    </conflict>
</comment>
<sequence length="255" mass="28617">MNKKRRLEKILDMLKIDGTITIKEIIDELDISDMTARRDLDALEADGLLTRTHGGAQLLSSKKPLEKTHIEKKSLNTKEKIDIAKKACSLIKDGDTIFIGPGTTLVQLALELKGRKGYKIRVITNSLPVFLILNDSETIDLLLLGGEYREITGAFVGSMASTNLKAMRFAKAFVRANAVTHNSIATYSDKEGVIQQLALNNAVEKFLLVDSTKFDRYDFFNFYNLDQLDTIITDNQISPQHLEEFSQYTTILKAD</sequence>
<dbReference type="EMBL" id="M60673">
    <property type="protein sequence ID" value="AAA25186.1"/>
    <property type="status" value="ALT_INIT"/>
    <property type="molecule type" value="Genomic_DNA"/>
</dbReference>
<dbReference type="EMBL" id="M35375">
    <property type="protein sequence ID" value="AAA25175.1"/>
    <property type="molecule type" value="Genomic_DNA"/>
</dbReference>
<dbReference type="EMBL" id="M35375">
    <property type="protein sequence ID" value="AAA25174.1"/>
    <property type="status" value="ALT_INIT"/>
    <property type="molecule type" value="Genomic_DNA"/>
</dbReference>
<dbReference type="EMBL" id="M60447">
    <property type="protein sequence ID" value="AAA25176.1"/>
    <property type="status" value="ALT_INIT"/>
    <property type="molecule type" value="Genomic_DNA"/>
</dbReference>
<dbReference type="EMBL" id="M65190">
    <property type="status" value="NOT_ANNOTATED_CDS"/>
    <property type="molecule type" value="Genomic_DNA"/>
</dbReference>
<dbReference type="PIR" id="A36098">
    <property type="entry name" value="A36098"/>
</dbReference>
<dbReference type="PIR" id="E39778">
    <property type="entry name" value="E39778"/>
</dbReference>
<dbReference type="SMR" id="P18816"/>
<dbReference type="GO" id="GO:0003677">
    <property type="term" value="F:DNA binding"/>
    <property type="evidence" value="ECO:0007669"/>
    <property type="project" value="UniProtKB-KW"/>
</dbReference>
<dbReference type="GO" id="GO:0003700">
    <property type="term" value="F:DNA-binding transcription factor activity"/>
    <property type="evidence" value="ECO:0007669"/>
    <property type="project" value="InterPro"/>
</dbReference>
<dbReference type="GO" id="GO:0005988">
    <property type="term" value="P:lactose metabolic process"/>
    <property type="evidence" value="ECO:0007669"/>
    <property type="project" value="UniProtKB-KW"/>
</dbReference>
<dbReference type="Gene3D" id="3.40.50.1360">
    <property type="match status" value="1"/>
</dbReference>
<dbReference type="Gene3D" id="1.10.10.10">
    <property type="entry name" value="Winged helix-like DNA-binding domain superfamily/Winged helix DNA-binding domain"/>
    <property type="match status" value="1"/>
</dbReference>
<dbReference type="InterPro" id="IPR050313">
    <property type="entry name" value="Carb_Metab_HTH_regulators"/>
</dbReference>
<dbReference type="InterPro" id="IPR014036">
    <property type="entry name" value="DeoR-like_C"/>
</dbReference>
<dbReference type="InterPro" id="IPR001034">
    <property type="entry name" value="DeoR_HTH"/>
</dbReference>
<dbReference type="InterPro" id="IPR037171">
    <property type="entry name" value="NagB/RpiA_transferase-like"/>
</dbReference>
<dbReference type="InterPro" id="IPR018356">
    <property type="entry name" value="Tscrpt_reg_HTH_DeoR_CS"/>
</dbReference>
<dbReference type="InterPro" id="IPR036388">
    <property type="entry name" value="WH-like_DNA-bd_sf"/>
</dbReference>
<dbReference type="InterPro" id="IPR036390">
    <property type="entry name" value="WH_DNA-bd_sf"/>
</dbReference>
<dbReference type="PANTHER" id="PTHR30363:SF4">
    <property type="entry name" value="GLYCEROL-3-PHOSPHATE REGULON REPRESSOR"/>
    <property type="match status" value="1"/>
</dbReference>
<dbReference type="PANTHER" id="PTHR30363">
    <property type="entry name" value="HTH-TYPE TRANSCRIPTIONAL REGULATOR SRLR-RELATED"/>
    <property type="match status" value="1"/>
</dbReference>
<dbReference type="Pfam" id="PF00455">
    <property type="entry name" value="DeoRC"/>
    <property type="match status" value="1"/>
</dbReference>
<dbReference type="Pfam" id="PF08220">
    <property type="entry name" value="HTH_DeoR"/>
    <property type="match status" value="1"/>
</dbReference>
<dbReference type="PRINTS" id="PR00037">
    <property type="entry name" value="HTHLACR"/>
</dbReference>
<dbReference type="SMART" id="SM01134">
    <property type="entry name" value="DeoRC"/>
    <property type="match status" value="1"/>
</dbReference>
<dbReference type="SMART" id="SM00420">
    <property type="entry name" value="HTH_DEOR"/>
    <property type="match status" value="1"/>
</dbReference>
<dbReference type="SUPFAM" id="SSF100950">
    <property type="entry name" value="NagB/RpiA/CoA transferase-like"/>
    <property type="match status" value="1"/>
</dbReference>
<dbReference type="SUPFAM" id="SSF46785">
    <property type="entry name" value="Winged helix' DNA-binding domain"/>
    <property type="match status" value="1"/>
</dbReference>
<dbReference type="PROSITE" id="PS00894">
    <property type="entry name" value="HTH_DEOR_1"/>
    <property type="match status" value="1"/>
</dbReference>
<dbReference type="PROSITE" id="PS51000">
    <property type="entry name" value="HTH_DEOR_2"/>
    <property type="match status" value="1"/>
</dbReference>
<gene>
    <name type="primary">lacR</name>
</gene>
<proteinExistence type="predicted"/>
<protein>
    <recommendedName>
        <fullName>Lactose phosphotransferase system repressor</fullName>
    </recommendedName>
</protein>
<geneLocation type="plasmid">
    <name>pLP712</name>
</geneLocation>
<reference key="1">
    <citation type="journal article" date="1990" name="J. Biol. Chem.">
        <title>Molecular cloning, transcriptional analysis, and nucleotide sequence of lacR, a gene encoding the repressor of the lactose phosphotransferase system of Lactococcus lactis.</title>
        <authorList>
            <person name="van Rooijen R.J."/>
            <person name="de Vos W.M."/>
        </authorList>
    </citation>
    <scope>NUCLEOTIDE SEQUENCE [GENOMIC DNA]</scope>
    <source>
        <strain>MG1820</strain>
    </source>
</reference>
<reference key="2">
    <citation type="journal article" date="1991" name="J. Biol. Chem.">
        <title>Molecular cloning, characterization, and nucleotide sequence of the tagatose 6-phosphate pathway gene cluster of the lactose operon of Lactococcus lactis.</title>
        <authorList>
            <person name="van Rooijen R.J."/>
            <person name="van Schalkwijk S."/>
            <person name="de Vos W.M."/>
        </authorList>
    </citation>
    <scope>NUCLEOTIDE SEQUENCE [GENOMIC DNA] OF 1-13</scope>
    <source>
        <strain>MG1820</strain>
    </source>
</reference>
<evidence type="ECO:0000255" key="1">
    <source>
        <dbReference type="PROSITE-ProRule" id="PRU00349"/>
    </source>
</evidence>
<evidence type="ECO:0000305" key="2"/>
<accession>P18816</accession>
<organism>
    <name type="scientific">Lactococcus lactis subsp. lactis</name>
    <name type="common">Streptococcus lactis</name>
    <dbReference type="NCBI Taxonomy" id="1360"/>
    <lineage>
        <taxon>Bacteria</taxon>
        <taxon>Bacillati</taxon>
        <taxon>Bacillota</taxon>
        <taxon>Bacilli</taxon>
        <taxon>Lactobacillales</taxon>
        <taxon>Streptococcaceae</taxon>
        <taxon>Lactococcus</taxon>
    </lineage>
</organism>
<name>LACR_LACLL</name>